<dbReference type="EMBL" id="CP001138">
    <property type="protein sequence ID" value="ACH51977.1"/>
    <property type="molecule type" value="Genomic_DNA"/>
</dbReference>
<dbReference type="RefSeq" id="WP_001051875.1">
    <property type="nucleotide sequence ID" value="NC_011149.1"/>
</dbReference>
<dbReference type="SMR" id="B5F387"/>
<dbReference type="KEGG" id="sea:SeAg_B4639"/>
<dbReference type="HOGENOM" id="CLU_113688_2_1_6"/>
<dbReference type="Proteomes" id="UP000008819">
    <property type="component" value="Chromosome"/>
</dbReference>
<dbReference type="GO" id="GO:0005829">
    <property type="term" value="C:cytosol"/>
    <property type="evidence" value="ECO:0007669"/>
    <property type="project" value="TreeGrafter"/>
</dbReference>
<dbReference type="GO" id="GO:0003723">
    <property type="term" value="F:RNA binding"/>
    <property type="evidence" value="ECO:0007669"/>
    <property type="project" value="UniProtKB-UniRule"/>
</dbReference>
<dbReference type="GO" id="GO:0006355">
    <property type="term" value="P:regulation of DNA-templated transcription"/>
    <property type="evidence" value="ECO:0007669"/>
    <property type="project" value="InterPro"/>
</dbReference>
<dbReference type="GO" id="GO:0043487">
    <property type="term" value="P:regulation of RNA stability"/>
    <property type="evidence" value="ECO:0007669"/>
    <property type="project" value="TreeGrafter"/>
</dbReference>
<dbReference type="GO" id="GO:0045974">
    <property type="term" value="P:regulation of translation, ncRNA-mediated"/>
    <property type="evidence" value="ECO:0007669"/>
    <property type="project" value="TreeGrafter"/>
</dbReference>
<dbReference type="CDD" id="cd01716">
    <property type="entry name" value="Hfq"/>
    <property type="match status" value="1"/>
</dbReference>
<dbReference type="FunFam" id="2.30.30.100:FF:000001">
    <property type="entry name" value="RNA-binding protein Hfq"/>
    <property type="match status" value="1"/>
</dbReference>
<dbReference type="Gene3D" id="2.30.30.100">
    <property type="match status" value="1"/>
</dbReference>
<dbReference type="HAMAP" id="MF_00436">
    <property type="entry name" value="Hfq"/>
    <property type="match status" value="1"/>
</dbReference>
<dbReference type="InterPro" id="IPR005001">
    <property type="entry name" value="Hfq"/>
</dbReference>
<dbReference type="InterPro" id="IPR010920">
    <property type="entry name" value="LSM_dom_sf"/>
</dbReference>
<dbReference type="InterPro" id="IPR047575">
    <property type="entry name" value="Sm"/>
</dbReference>
<dbReference type="NCBIfam" id="TIGR02383">
    <property type="entry name" value="Hfq"/>
    <property type="match status" value="1"/>
</dbReference>
<dbReference type="NCBIfam" id="NF001602">
    <property type="entry name" value="PRK00395.1"/>
    <property type="match status" value="1"/>
</dbReference>
<dbReference type="PANTHER" id="PTHR34772">
    <property type="entry name" value="RNA-BINDING PROTEIN HFQ"/>
    <property type="match status" value="1"/>
</dbReference>
<dbReference type="PANTHER" id="PTHR34772:SF1">
    <property type="entry name" value="RNA-BINDING PROTEIN HFQ"/>
    <property type="match status" value="1"/>
</dbReference>
<dbReference type="Pfam" id="PF17209">
    <property type="entry name" value="Hfq"/>
    <property type="match status" value="1"/>
</dbReference>
<dbReference type="SUPFAM" id="SSF50182">
    <property type="entry name" value="Sm-like ribonucleoproteins"/>
    <property type="match status" value="1"/>
</dbReference>
<dbReference type="PROSITE" id="PS52002">
    <property type="entry name" value="SM"/>
    <property type="match status" value="1"/>
</dbReference>
<sequence length="102" mass="11133">MAKGQSLQDPFLNALRRERVPVSIYLVNGIKLQGQIESFDQFVILLKNTVSQMVYKHAISTVVPSRPVSHHSNNAGGGASNNYHHGSNAQGSTAQQDSEETE</sequence>
<reference key="1">
    <citation type="journal article" date="2011" name="J. Bacteriol.">
        <title>Comparative genomics of 28 Salmonella enterica isolates: evidence for CRISPR-mediated adaptive sublineage evolution.</title>
        <authorList>
            <person name="Fricke W.F."/>
            <person name="Mammel M.K."/>
            <person name="McDermott P.F."/>
            <person name="Tartera C."/>
            <person name="White D.G."/>
            <person name="Leclerc J.E."/>
            <person name="Ravel J."/>
            <person name="Cebula T.A."/>
        </authorList>
    </citation>
    <scope>NUCLEOTIDE SEQUENCE [LARGE SCALE GENOMIC DNA]</scope>
    <source>
        <strain>SL483</strain>
    </source>
</reference>
<keyword id="KW-0694">RNA-binding</keyword>
<keyword id="KW-0346">Stress response</keyword>
<organism>
    <name type="scientific">Salmonella agona (strain SL483)</name>
    <dbReference type="NCBI Taxonomy" id="454166"/>
    <lineage>
        <taxon>Bacteria</taxon>
        <taxon>Pseudomonadati</taxon>
        <taxon>Pseudomonadota</taxon>
        <taxon>Gammaproteobacteria</taxon>
        <taxon>Enterobacterales</taxon>
        <taxon>Enterobacteriaceae</taxon>
        <taxon>Salmonella</taxon>
    </lineage>
</organism>
<feature type="chain" id="PRO_1000190351" description="RNA-binding protein Hfq">
    <location>
        <begin position="1"/>
        <end position="102"/>
    </location>
</feature>
<feature type="domain" description="Sm" evidence="2">
    <location>
        <begin position="9"/>
        <end position="68"/>
    </location>
</feature>
<feature type="region of interest" description="Disordered" evidence="3">
    <location>
        <begin position="63"/>
        <end position="102"/>
    </location>
</feature>
<feature type="compositionally biased region" description="Low complexity" evidence="3">
    <location>
        <begin position="70"/>
        <end position="88"/>
    </location>
</feature>
<comment type="function">
    <text evidence="1">RNA chaperone that binds small regulatory RNA (sRNAs) and mRNAs to facilitate mRNA translational regulation in response to envelope stress, environmental stress and changes in metabolite concentrations. Also binds with high specificity to tRNAs.</text>
</comment>
<comment type="subunit">
    <text evidence="1">Homohexamer.</text>
</comment>
<comment type="similarity">
    <text evidence="1">Belongs to the Hfq family.</text>
</comment>
<accession>B5F387</accession>
<gene>
    <name evidence="1" type="primary">hfq</name>
    <name type="ordered locus">SeAg_B4639</name>
</gene>
<protein>
    <recommendedName>
        <fullName evidence="1">RNA-binding protein Hfq</fullName>
    </recommendedName>
</protein>
<proteinExistence type="inferred from homology"/>
<name>HFQ_SALA4</name>
<evidence type="ECO:0000255" key="1">
    <source>
        <dbReference type="HAMAP-Rule" id="MF_00436"/>
    </source>
</evidence>
<evidence type="ECO:0000255" key="2">
    <source>
        <dbReference type="PROSITE-ProRule" id="PRU01346"/>
    </source>
</evidence>
<evidence type="ECO:0000256" key="3">
    <source>
        <dbReference type="SAM" id="MobiDB-lite"/>
    </source>
</evidence>